<proteinExistence type="evidence at transcript level"/>
<reference key="1">
    <citation type="journal article" date="2010" name="Zoology">
        <title>Transcriptome analysis of the venom glands of the Chinese wolf spider Lycosa singoriensis.</title>
        <authorList>
            <person name="Zhang Y."/>
            <person name="Chen J."/>
            <person name="Tang X."/>
            <person name="Wang F."/>
            <person name="Jiang L."/>
            <person name="Xiong X."/>
            <person name="Wang M."/>
            <person name="Rong M."/>
            <person name="Liu Z."/>
            <person name="Liang S."/>
        </authorList>
    </citation>
    <scope>NUCLEOTIDE SEQUENCE [LARGE SCALE MRNA]</scope>
    <source>
        <tissue>Venom gland</tissue>
    </source>
</reference>
<protein>
    <recommendedName>
        <fullName>U3-lycotoxin-Ls1l</fullName>
    </recommendedName>
    <alternativeName>
        <fullName>Toxin-like structure LSTX-B26</fullName>
    </alternativeName>
</protein>
<accession>B6DCS1</accession>
<name>TX326_LYCSI</name>
<feature type="signal peptide" evidence="1">
    <location>
        <begin position="1"/>
        <end position="20"/>
    </location>
</feature>
<feature type="propeptide" id="PRO_0000401655" evidence="1">
    <location>
        <begin position="21"/>
        <end position="44"/>
    </location>
</feature>
<feature type="chain" id="PRO_0000401656" description="U3-lycotoxin-Ls1l">
    <location>
        <begin position="45"/>
        <end position="115"/>
    </location>
</feature>
<feature type="disulfide bond" evidence="1">
    <location>
        <begin position="55"/>
        <end position="72"/>
    </location>
</feature>
<feature type="disulfide bond" evidence="1">
    <location>
        <begin position="62"/>
        <end position="87"/>
    </location>
</feature>
<feature type="disulfide bond" evidence="1">
    <location>
        <begin position="74"/>
        <end position="85"/>
    </location>
</feature>
<evidence type="ECO:0000250" key="1"/>
<evidence type="ECO:0000305" key="2"/>
<organism>
    <name type="scientific">Lycosa singoriensis</name>
    <name type="common">Wolf spider</name>
    <name type="synonym">Aranea singoriensis</name>
    <dbReference type="NCBI Taxonomy" id="434756"/>
    <lineage>
        <taxon>Eukaryota</taxon>
        <taxon>Metazoa</taxon>
        <taxon>Ecdysozoa</taxon>
        <taxon>Arthropoda</taxon>
        <taxon>Chelicerata</taxon>
        <taxon>Arachnida</taxon>
        <taxon>Araneae</taxon>
        <taxon>Araneomorphae</taxon>
        <taxon>Entelegynae</taxon>
        <taxon>Lycosoidea</taxon>
        <taxon>Lycosidae</taxon>
        <taxon>Lycosa</taxon>
    </lineage>
</organism>
<dbReference type="EMBL" id="EU926005">
    <property type="protein sequence ID" value="ACI41337.1"/>
    <property type="molecule type" value="mRNA"/>
</dbReference>
<dbReference type="EMBL" id="FM864009">
    <property type="protein sequence ID" value="CAS03607.1"/>
    <property type="molecule type" value="mRNA"/>
</dbReference>
<dbReference type="SMR" id="B6DCS1"/>
<dbReference type="ArachnoServer" id="AS000954">
    <property type="toxin name" value="U3-lycotoxin-Ls1l"/>
</dbReference>
<dbReference type="GO" id="GO:0005576">
    <property type="term" value="C:extracellular region"/>
    <property type="evidence" value="ECO:0007669"/>
    <property type="project" value="UniProtKB-SubCell"/>
</dbReference>
<dbReference type="GO" id="GO:0090729">
    <property type="term" value="F:toxin activity"/>
    <property type="evidence" value="ECO:0007669"/>
    <property type="project" value="UniProtKB-KW"/>
</dbReference>
<comment type="subcellular location">
    <subcellularLocation>
        <location evidence="1">Secreted</location>
    </subcellularLocation>
</comment>
<comment type="tissue specificity">
    <text>Expressed by the venom gland.</text>
</comment>
<comment type="similarity">
    <text evidence="2">Belongs to the neurotoxin 19 (CSTX) family. 01 subfamily.</text>
</comment>
<keyword id="KW-1015">Disulfide bond</keyword>
<keyword id="KW-0964">Secreted</keyword>
<keyword id="KW-0732">Signal</keyword>
<keyword id="KW-0800">Toxin</keyword>
<sequence>MKFVLLFGVLLVTLFSYSSAEMLDDFDQADEDELLSLIEKEEARAKECTPRFYDCSHDRHSCYRSELFKDVCTCFYPEGGDNEVCTCQQPKHLKYMEKAAGKAKKFGGKIKKWFG</sequence>